<keyword id="KW-0963">Cytoplasm</keyword>
<keyword id="KW-0342">GTP-binding</keyword>
<keyword id="KW-0460">Magnesium</keyword>
<keyword id="KW-0479">Metal-binding</keyword>
<keyword id="KW-0501">Molybdenum cofactor biosynthesis</keyword>
<keyword id="KW-0547">Nucleotide-binding</keyword>
<keyword id="KW-1185">Reference proteome</keyword>
<keyword id="KW-0808">Transferase</keyword>
<comment type="function">
    <text evidence="1">Transfers a GMP moiety from GTP to Mo-molybdopterin (Mo-MPT) cofactor (Moco or molybdenum cofactor) to form Mo-molybdopterin guanine dinucleotide (Mo-MGD) cofactor.</text>
</comment>
<comment type="catalytic activity">
    <reaction evidence="1">
        <text>Mo-molybdopterin + GTP + H(+) = Mo-molybdopterin guanine dinucleotide + diphosphate</text>
        <dbReference type="Rhea" id="RHEA:34243"/>
        <dbReference type="ChEBI" id="CHEBI:15378"/>
        <dbReference type="ChEBI" id="CHEBI:33019"/>
        <dbReference type="ChEBI" id="CHEBI:37565"/>
        <dbReference type="ChEBI" id="CHEBI:71302"/>
        <dbReference type="ChEBI" id="CHEBI:71310"/>
        <dbReference type="EC" id="2.7.7.77"/>
    </reaction>
</comment>
<comment type="cofactor">
    <cofactor evidence="1">
        <name>Mg(2+)</name>
        <dbReference type="ChEBI" id="CHEBI:18420"/>
    </cofactor>
</comment>
<comment type="subunit">
    <text evidence="1">Monomer.</text>
</comment>
<comment type="subcellular location">
    <subcellularLocation>
        <location evidence="1">Cytoplasm</location>
    </subcellularLocation>
</comment>
<comment type="domain">
    <text evidence="1">The N-terminal domain determines nucleotide recognition and specific binding, while the C-terminal domain determines the specific binding to the target protein.</text>
</comment>
<comment type="similarity">
    <text evidence="1">Belongs to the MobA family.</text>
</comment>
<organism>
    <name type="scientific">Shewanella woodyi (strain ATCC 51908 / MS32)</name>
    <dbReference type="NCBI Taxonomy" id="392500"/>
    <lineage>
        <taxon>Bacteria</taxon>
        <taxon>Pseudomonadati</taxon>
        <taxon>Pseudomonadota</taxon>
        <taxon>Gammaproteobacteria</taxon>
        <taxon>Alteromonadales</taxon>
        <taxon>Shewanellaceae</taxon>
        <taxon>Shewanella</taxon>
    </lineage>
</organism>
<name>MOBA_SHEWM</name>
<sequence>MSLRIDAVILAGGMARRMGGNDKGLVELLDKPMIEHSIDRIKPQVKEIMINANRNQSRYADLGYPVFSDEDSGYLGPLAGMITAMGQTQADYLLVVPCDCPLLPLDLVERMLTKIQSEGAELAVASDGKREQPVVLLLKPSLRDSMKAFLDGGERKIDFWYAKHHCVVTEFSDQPNAFINVNTPEQKQQLAEAIAK</sequence>
<evidence type="ECO:0000255" key="1">
    <source>
        <dbReference type="HAMAP-Rule" id="MF_00316"/>
    </source>
</evidence>
<gene>
    <name evidence="1" type="primary">mobA</name>
    <name type="ordered locus">Swoo_0084</name>
</gene>
<proteinExistence type="inferred from homology"/>
<dbReference type="EC" id="2.7.7.77" evidence="1"/>
<dbReference type="EMBL" id="CP000961">
    <property type="protein sequence ID" value="ACA84385.1"/>
    <property type="molecule type" value="Genomic_DNA"/>
</dbReference>
<dbReference type="RefSeq" id="WP_012322734.1">
    <property type="nucleotide sequence ID" value="NC_010506.1"/>
</dbReference>
<dbReference type="SMR" id="B1KL44"/>
<dbReference type="STRING" id="392500.Swoo_0084"/>
<dbReference type="KEGG" id="swd:Swoo_0084"/>
<dbReference type="eggNOG" id="COG0746">
    <property type="taxonomic scope" value="Bacteria"/>
</dbReference>
<dbReference type="HOGENOM" id="CLU_055597_5_1_6"/>
<dbReference type="Proteomes" id="UP000002168">
    <property type="component" value="Chromosome"/>
</dbReference>
<dbReference type="GO" id="GO:0005737">
    <property type="term" value="C:cytoplasm"/>
    <property type="evidence" value="ECO:0007669"/>
    <property type="project" value="UniProtKB-SubCell"/>
</dbReference>
<dbReference type="GO" id="GO:0005525">
    <property type="term" value="F:GTP binding"/>
    <property type="evidence" value="ECO:0007669"/>
    <property type="project" value="UniProtKB-UniRule"/>
</dbReference>
<dbReference type="GO" id="GO:0046872">
    <property type="term" value="F:metal ion binding"/>
    <property type="evidence" value="ECO:0007669"/>
    <property type="project" value="UniProtKB-KW"/>
</dbReference>
<dbReference type="GO" id="GO:0061603">
    <property type="term" value="F:molybdenum cofactor guanylyltransferase activity"/>
    <property type="evidence" value="ECO:0007669"/>
    <property type="project" value="UniProtKB-EC"/>
</dbReference>
<dbReference type="GO" id="GO:1902758">
    <property type="term" value="P:bis(molybdopterin guanine dinucleotide)molybdenum biosynthetic process"/>
    <property type="evidence" value="ECO:0007669"/>
    <property type="project" value="TreeGrafter"/>
</dbReference>
<dbReference type="CDD" id="cd02503">
    <property type="entry name" value="MobA"/>
    <property type="match status" value="1"/>
</dbReference>
<dbReference type="Gene3D" id="3.90.550.10">
    <property type="entry name" value="Spore Coat Polysaccharide Biosynthesis Protein SpsA, Chain A"/>
    <property type="match status" value="1"/>
</dbReference>
<dbReference type="HAMAP" id="MF_00316">
    <property type="entry name" value="MobA"/>
    <property type="match status" value="1"/>
</dbReference>
<dbReference type="InterPro" id="IPR025877">
    <property type="entry name" value="MobA-like_NTP_Trfase"/>
</dbReference>
<dbReference type="InterPro" id="IPR013482">
    <property type="entry name" value="Molybde_CF_guanTrfase"/>
</dbReference>
<dbReference type="InterPro" id="IPR029044">
    <property type="entry name" value="Nucleotide-diphossugar_trans"/>
</dbReference>
<dbReference type="NCBIfam" id="TIGR02665">
    <property type="entry name" value="molyb_mobA"/>
    <property type="match status" value="1"/>
</dbReference>
<dbReference type="PANTHER" id="PTHR19136">
    <property type="entry name" value="MOLYBDENUM COFACTOR GUANYLYLTRANSFERASE"/>
    <property type="match status" value="1"/>
</dbReference>
<dbReference type="PANTHER" id="PTHR19136:SF81">
    <property type="entry name" value="MOLYBDENUM COFACTOR GUANYLYLTRANSFERASE"/>
    <property type="match status" value="1"/>
</dbReference>
<dbReference type="Pfam" id="PF12804">
    <property type="entry name" value="NTP_transf_3"/>
    <property type="match status" value="1"/>
</dbReference>
<dbReference type="SUPFAM" id="SSF53448">
    <property type="entry name" value="Nucleotide-diphospho-sugar transferases"/>
    <property type="match status" value="1"/>
</dbReference>
<reference key="1">
    <citation type="submission" date="2008-02" db="EMBL/GenBank/DDBJ databases">
        <title>Complete sequence of Shewanella woodyi ATCC 51908.</title>
        <authorList>
            <consortium name="US DOE Joint Genome Institute"/>
            <person name="Copeland A."/>
            <person name="Lucas S."/>
            <person name="Lapidus A."/>
            <person name="Glavina del Rio T."/>
            <person name="Dalin E."/>
            <person name="Tice H."/>
            <person name="Bruce D."/>
            <person name="Goodwin L."/>
            <person name="Pitluck S."/>
            <person name="Sims D."/>
            <person name="Brettin T."/>
            <person name="Detter J.C."/>
            <person name="Han C."/>
            <person name="Kuske C.R."/>
            <person name="Schmutz J."/>
            <person name="Larimer F."/>
            <person name="Land M."/>
            <person name="Hauser L."/>
            <person name="Kyrpides N."/>
            <person name="Lykidis A."/>
            <person name="Zhao J.-S."/>
            <person name="Richardson P."/>
        </authorList>
    </citation>
    <scope>NUCLEOTIDE SEQUENCE [LARGE SCALE GENOMIC DNA]</scope>
    <source>
        <strain>ATCC 51908 / MS32</strain>
    </source>
</reference>
<feature type="chain" id="PRO_1000115809" description="Molybdenum cofactor guanylyltransferase">
    <location>
        <begin position="1"/>
        <end position="196"/>
    </location>
</feature>
<feature type="binding site" evidence="1">
    <location>
        <begin position="10"/>
        <end position="12"/>
    </location>
    <ligand>
        <name>GTP</name>
        <dbReference type="ChEBI" id="CHEBI:37565"/>
    </ligand>
</feature>
<feature type="binding site" evidence="1">
    <location>
        <position position="23"/>
    </location>
    <ligand>
        <name>GTP</name>
        <dbReference type="ChEBI" id="CHEBI:37565"/>
    </ligand>
</feature>
<feature type="binding site" evidence="1">
    <location>
        <position position="51"/>
    </location>
    <ligand>
        <name>GTP</name>
        <dbReference type="ChEBI" id="CHEBI:37565"/>
    </ligand>
</feature>
<feature type="binding site" evidence="1">
    <location>
        <position position="69"/>
    </location>
    <ligand>
        <name>GTP</name>
        <dbReference type="ChEBI" id="CHEBI:37565"/>
    </ligand>
</feature>
<feature type="binding site" evidence="1">
    <location>
        <position position="99"/>
    </location>
    <ligand>
        <name>GTP</name>
        <dbReference type="ChEBI" id="CHEBI:37565"/>
    </ligand>
</feature>
<feature type="binding site" evidence="1">
    <location>
        <position position="99"/>
    </location>
    <ligand>
        <name>Mg(2+)</name>
        <dbReference type="ChEBI" id="CHEBI:18420"/>
    </ligand>
</feature>
<accession>B1KL44</accession>
<protein>
    <recommendedName>
        <fullName evidence="1">Molybdenum cofactor guanylyltransferase</fullName>
        <shortName evidence="1">MoCo guanylyltransferase</shortName>
        <ecNumber evidence="1">2.7.7.77</ecNumber>
    </recommendedName>
    <alternativeName>
        <fullName evidence="1">GTP:molybdopterin guanylyltransferase</fullName>
    </alternativeName>
    <alternativeName>
        <fullName evidence="1">Mo-MPT guanylyltransferase</fullName>
    </alternativeName>
    <alternativeName>
        <fullName evidence="1">Molybdopterin guanylyltransferase</fullName>
    </alternativeName>
    <alternativeName>
        <fullName evidence="1">Molybdopterin-guanine dinucleotide synthase</fullName>
        <shortName evidence="1">MGD synthase</shortName>
    </alternativeName>
</protein>